<keyword id="KW-0963">Cytoplasm</keyword>
<keyword id="KW-0227">DNA damage</keyword>
<keyword id="KW-0233">DNA recombination</keyword>
<keyword id="KW-0234">DNA repair</keyword>
<keyword id="KW-0238">DNA-binding</keyword>
<keyword id="KW-0255">Endonuclease</keyword>
<keyword id="KW-0378">Hydrolase</keyword>
<keyword id="KW-0460">Magnesium</keyword>
<keyword id="KW-0479">Metal-binding</keyword>
<keyword id="KW-0540">Nuclease</keyword>
<keyword id="KW-1185">Reference proteome</keyword>
<protein>
    <recommendedName>
        <fullName evidence="1">Crossover junction endodeoxyribonuclease RuvC</fullName>
        <ecNumber evidence="1">3.1.21.10</ecNumber>
    </recommendedName>
    <alternativeName>
        <fullName evidence="1">Holliday junction nuclease RuvC</fullName>
    </alternativeName>
    <alternativeName>
        <fullName evidence="1">Holliday junction resolvase RuvC</fullName>
    </alternativeName>
</protein>
<gene>
    <name evidence="1" type="primary">ruvC</name>
    <name type="ordered locus">VF_0950</name>
</gene>
<sequence>MSIILGIDPGSRITGYGVIRQNGRHLQYLGSGCIRMSEKELPGRLKQIYAGVSEIITQFQPDVFAIEQVFMSKNADSALKLGQARGSAIVAAVNADLPVYEYAARLIKQAVTGTGGADKSQVQHMVMSMLKLPAKPQADAADALGAAICHANTNKTLIALAGKATGARRGRYR</sequence>
<accession>Q5E6A1</accession>
<dbReference type="EC" id="3.1.21.10" evidence="1"/>
<dbReference type="EMBL" id="CP000020">
    <property type="protein sequence ID" value="AAW85445.1"/>
    <property type="molecule type" value="Genomic_DNA"/>
</dbReference>
<dbReference type="RefSeq" id="WP_005418602.1">
    <property type="nucleotide sequence ID" value="NZ_CAWLES010000001.1"/>
</dbReference>
<dbReference type="RefSeq" id="YP_204333.1">
    <property type="nucleotide sequence ID" value="NC_006840.2"/>
</dbReference>
<dbReference type="SMR" id="Q5E6A1"/>
<dbReference type="STRING" id="312309.VF_0950"/>
<dbReference type="EnsemblBacteria" id="AAW85445">
    <property type="protein sequence ID" value="AAW85445"/>
    <property type="gene ID" value="VF_0950"/>
</dbReference>
<dbReference type="GeneID" id="54163620"/>
<dbReference type="KEGG" id="vfi:VF_0950"/>
<dbReference type="PATRIC" id="fig|312309.11.peg.948"/>
<dbReference type="eggNOG" id="COG0817">
    <property type="taxonomic scope" value="Bacteria"/>
</dbReference>
<dbReference type="HOGENOM" id="CLU_091257_2_1_6"/>
<dbReference type="OrthoDB" id="9805499at2"/>
<dbReference type="Proteomes" id="UP000000537">
    <property type="component" value="Chromosome I"/>
</dbReference>
<dbReference type="GO" id="GO:0005737">
    <property type="term" value="C:cytoplasm"/>
    <property type="evidence" value="ECO:0007669"/>
    <property type="project" value="UniProtKB-SubCell"/>
</dbReference>
<dbReference type="GO" id="GO:0048476">
    <property type="term" value="C:Holliday junction resolvase complex"/>
    <property type="evidence" value="ECO:0007669"/>
    <property type="project" value="UniProtKB-UniRule"/>
</dbReference>
<dbReference type="GO" id="GO:0008821">
    <property type="term" value="F:crossover junction DNA endonuclease activity"/>
    <property type="evidence" value="ECO:0007669"/>
    <property type="project" value="UniProtKB-UniRule"/>
</dbReference>
<dbReference type="GO" id="GO:0003677">
    <property type="term" value="F:DNA binding"/>
    <property type="evidence" value="ECO:0007669"/>
    <property type="project" value="UniProtKB-KW"/>
</dbReference>
<dbReference type="GO" id="GO:0000287">
    <property type="term" value="F:magnesium ion binding"/>
    <property type="evidence" value="ECO:0007669"/>
    <property type="project" value="UniProtKB-UniRule"/>
</dbReference>
<dbReference type="GO" id="GO:0006310">
    <property type="term" value="P:DNA recombination"/>
    <property type="evidence" value="ECO:0007669"/>
    <property type="project" value="UniProtKB-UniRule"/>
</dbReference>
<dbReference type="GO" id="GO:0006281">
    <property type="term" value="P:DNA repair"/>
    <property type="evidence" value="ECO:0007669"/>
    <property type="project" value="UniProtKB-UniRule"/>
</dbReference>
<dbReference type="CDD" id="cd16962">
    <property type="entry name" value="RuvC"/>
    <property type="match status" value="1"/>
</dbReference>
<dbReference type="FunFam" id="3.30.420.10:FF:000002">
    <property type="entry name" value="Crossover junction endodeoxyribonuclease RuvC"/>
    <property type="match status" value="1"/>
</dbReference>
<dbReference type="Gene3D" id="3.30.420.10">
    <property type="entry name" value="Ribonuclease H-like superfamily/Ribonuclease H"/>
    <property type="match status" value="1"/>
</dbReference>
<dbReference type="HAMAP" id="MF_00034">
    <property type="entry name" value="RuvC"/>
    <property type="match status" value="1"/>
</dbReference>
<dbReference type="InterPro" id="IPR012337">
    <property type="entry name" value="RNaseH-like_sf"/>
</dbReference>
<dbReference type="InterPro" id="IPR036397">
    <property type="entry name" value="RNaseH_sf"/>
</dbReference>
<dbReference type="InterPro" id="IPR020563">
    <property type="entry name" value="X-over_junc_endoDNase_Mg_BS"/>
</dbReference>
<dbReference type="InterPro" id="IPR002176">
    <property type="entry name" value="X-over_junc_endoDNase_RuvC"/>
</dbReference>
<dbReference type="NCBIfam" id="TIGR00228">
    <property type="entry name" value="ruvC"/>
    <property type="match status" value="1"/>
</dbReference>
<dbReference type="PANTHER" id="PTHR30194">
    <property type="entry name" value="CROSSOVER JUNCTION ENDODEOXYRIBONUCLEASE RUVC"/>
    <property type="match status" value="1"/>
</dbReference>
<dbReference type="PANTHER" id="PTHR30194:SF3">
    <property type="entry name" value="CROSSOVER JUNCTION ENDODEOXYRIBONUCLEASE RUVC"/>
    <property type="match status" value="1"/>
</dbReference>
<dbReference type="Pfam" id="PF02075">
    <property type="entry name" value="RuvC"/>
    <property type="match status" value="1"/>
</dbReference>
<dbReference type="PRINTS" id="PR00696">
    <property type="entry name" value="RSOLVASERUVC"/>
</dbReference>
<dbReference type="SUPFAM" id="SSF53098">
    <property type="entry name" value="Ribonuclease H-like"/>
    <property type="match status" value="1"/>
</dbReference>
<dbReference type="PROSITE" id="PS01321">
    <property type="entry name" value="RUVC"/>
    <property type="match status" value="1"/>
</dbReference>
<proteinExistence type="inferred from homology"/>
<organism>
    <name type="scientific">Aliivibrio fischeri (strain ATCC 700601 / ES114)</name>
    <name type="common">Vibrio fischeri</name>
    <dbReference type="NCBI Taxonomy" id="312309"/>
    <lineage>
        <taxon>Bacteria</taxon>
        <taxon>Pseudomonadati</taxon>
        <taxon>Pseudomonadota</taxon>
        <taxon>Gammaproteobacteria</taxon>
        <taxon>Vibrionales</taxon>
        <taxon>Vibrionaceae</taxon>
        <taxon>Aliivibrio</taxon>
    </lineage>
</organism>
<reference key="1">
    <citation type="journal article" date="2005" name="Proc. Natl. Acad. Sci. U.S.A.">
        <title>Complete genome sequence of Vibrio fischeri: a symbiotic bacterium with pathogenic congeners.</title>
        <authorList>
            <person name="Ruby E.G."/>
            <person name="Urbanowski M."/>
            <person name="Campbell J."/>
            <person name="Dunn A."/>
            <person name="Faini M."/>
            <person name="Gunsalus R."/>
            <person name="Lostroh P."/>
            <person name="Lupp C."/>
            <person name="McCann J."/>
            <person name="Millikan D."/>
            <person name="Schaefer A."/>
            <person name="Stabb E."/>
            <person name="Stevens A."/>
            <person name="Visick K."/>
            <person name="Whistler C."/>
            <person name="Greenberg E.P."/>
        </authorList>
    </citation>
    <scope>NUCLEOTIDE SEQUENCE [LARGE SCALE GENOMIC DNA]</scope>
    <source>
        <strain>ATCC 700601 / ES114</strain>
    </source>
</reference>
<feature type="chain" id="PRO_0000183143" description="Crossover junction endodeoxyribonuclease RuvC">
    <location>
        <begin position="1"/>
        <end position="173"/>
    </location>
</feature>
<feature type="active site" evidence="1">
    <location>
        <position position="8"/>
    </location>
</feature>
<feature type="active site" evidence="1">
    <location>
        <position position="67"/>
    </location>
</feature>
<feature type="active site" evidence="1">
    <location>
        <position position="139"/>
    </location>
</feature>
<feature type="binding site" evidence="1">
    <location>
        <position position="8"/>
    </location>
    <ligand>
        <name>Mg(2+)</name>
        <dbReference type="ChEBI" id="CHEBI:18420"/>
        <label>1</label>
    </ligand>
</feature>
<feature type="binding site" evidence="1">
    <location>
        <position position="67"/>
    </location>
    <ligand>
        <name>Mg(2+)</name>
        <dbReference type="ChEBI" id="CHEBI:18420"/>
        <label>2</label>
    </ligand>
</feature>
<feature type="binding site" evidence="1">
    <location>
        <position position="139"/>
    </location>
    <ligand>
        <name>Mg(2+)</name>
        <dbReference type="ChEBI" id="CHEBI:18420"/>
        <label>1</label>
    </ligand>
</feature>
<name>RUVC_ALIF1</name>
<evidence type="ECO:0000255" key="1">
    <source>
        <dbReference type="HAMAP-Rule" id="MF_00034"/>
    </source>
</evidence>
<comment type="function">
    <text evidence="1">The RuvA-RuvB-RuvC complex processes Holliday junction (HJ) DNA during genetic recombination and DNA repair. Endonuclease that resolves HJ intermediates. Cleaves cruciform DNA by making single-stranded nicks across the HJ at symmetrical positions within the homologous arms, yielding a 5'-phosphate and a 3'-hydroxyl group; requires a central core of homology in the junction. The consensus cleavage sequence is 5'-(A/T)TT(C/G)-3'. Cleavage occurs on the 3'-side of the TT dinucleotide at the point of strand exchange. HJ branch migration catalyzed by RuvA-RuvB allows RuvC to scan DNA until it finds its consensus sequence, where it cleaves and resolves the cruciform DNA.</text>
</comment>
<comment type="catalytic activity">
    <reaction evidence="1">
        <text>Endonucleolytic cleavage at a junction such as a reciprocal single-stranded crossover between two homologous DNA duplexes (Holliday junction).</text>
        <dbReference type="EC" id="3.1.21.10"/>
    </reaction>
</comment>
<comment type="cofactor">
    <cofactor evidence="1">
        <name>Mg(2+)</name>
        <dbReference type="ChEBI" id="CHEBI:18420"/>
    </cofactor>
    <text evidence="1">Binds 2 Mg(2+) ion per subunit.</text>
</comment>
<comment type="subunit">
    <text evidence="1">Homodimer which binds Holliday junction (HJ) DNA. The HJ becomes 2-fold symmetrical on binding to RuvC with unstacked arms; it has a different conformation from HJ DNA in complex with RuvA. In the full resolvosome a probable DNA-RuvA(4)-RuvB(12)-RuvC(2) complex forms which resolves the HJ.</text>
</comment>
<comment type="subcellular location">
    <subcellularLocation>
        <location evidence="1">Cytoplasm</location>
    </subcellularLocation>
</comment>
<comment type="similarity">
    <text evidence="1">Belongs to the RuvC family.</text>
</comment>